<keyword id="KW-0028">Amino-acid biosynthesis</keyword>
<keyword id="KW-0057">Aromatic amino acid biosynthesis</keyword>
<keyword id="KW-0274">FAD</keyword>
<keyword id="KW-0285">Flavoprotein</keyword>
<keyword id="KW-0288">FMN</keyword>
<keyword id="KW-0456">Lyase</keyword>
<keyword id="KW-0521">NADP</keyword>
<keyword id="KW-1185">Reference proteome</keyword>
<feature type="chain" id="PRO_0000140613" description="Chorismate synthase">
    <location>
        <begin position="1"/>
        <end position="407"/>
    </location>
</feature>
<feature type="binding site" evidence="1">
    <location>
        <position position="40"/>
    </location>
    <ligand>
        <name>NADP(+)</name>
        <dbReference type="ChEBI" id="CHEBI:58349"/>
    </ligand>
</feature>
<feature type="binding site" evidence="1">
    <location>
        <position position="46"/>
    </location>
    <ligand>
        <name>NADP(+)</name>
        <dbReference type="ChEBI" id="CHEBI:58349"/>
    </ligand>
</feature>
<feature type="binding site" evidence="1">
    <location>
        <begin position="135"/>
        <end position="137"/>
    </location>
    <ligand>
        <name>FMN</name>
        <dbReference type="ChEBI" id="CHEBI:58210"/>
    </ligand>
</feature>
<feature type="binding site" evidence="1">
    <location>
        <begin position="256"/>
        <end position="257"/>
    </location>
    <ligand>
        <name>FMN</name>
        <dbReference type="ChEBI" id="CHEBI:58210"/>
    </ligand>
</feature>
<feature type="binding site" evidence="1">
    <location>
        <position position="300"/>
    </location>
    <ligand>
        <name>FMN</name>
        <dbReference type="ChEBI" id="CHEBI:58210"/>
    </ligand>
</feature>
<feature type="binding site" evidence="1">
    <location>
        <begin position="315"/>
        <end position="319"/>
    </location>
    <ligand>
        <name>FMN</name>
        <dbReference type="ChEBI" id="CHEBI:58210"/>
    </ligand>
</feature>
<feature type="binding site" evidence="1">
    <location>
        <position position="341"/>
    </location>
    <ligand>
        <name>FMN</name>
        <dbReference type="ChEBI" id="CHEBI:58210"/>
    </ligand>
</feature>
<protein>
    <recommendedName>
        <fullName evidence="1">Chorismate synthase</fullName>
        <shortName evidence="1">CS</shortName>
        <ecNumber evidence="1">4.2.3.5</ecNumber>
    </recommendedName>
    <alternativeName>
        <fullName evidence="1">5-enolpyruvylshikimate-3-phosphate phospholyase</fullName>
    </alternativeName>
</protein>
<reference key="1">
    <citation type="journal article" date="2001" name="Nature">
        <title>Massive gene decay in the leprosy bacillus.</title>
        <authorList>
            <person name="Cole S.T."/>
            <person name="Eiglmeier K."/>
            <person name="Parkhill J."/>
            <person name="James K.D."/>
            <person name="Thomson N.R."/>
            <person name="Wheeler P.R."/>
            <person name="Honore N."/>
            <person name="Garnier T."/>
            <person name="Churcher C.M."/>
            <person name="Harris D.E."/>
            <person name="Mungall K.L."/>
            <person name="Basham D."/>
            <person name="Brown D."/>
            <person name="Chillingworth T."/>
            <person name="Connor R."/>
            <person name="Davies R.M."/>
            <person name="Devlin K."/>
            <person name="Duthoy S."/>
            <person name="Feltwell T."/>
            <person name="Fraser A."/>
            <person name="Hamlin N."/>
            <person name="Holroyd S."/>
            <person name="Hornsby T."/>
            <person name="Jagels K."/>
            <person name="Lacroix C."/>
            <person name="Maclean J."/>
            <person name="Moule S."/>
            <person name="Murphy L.D."/>
            <person name="Oliver K."/>
            <person name="Quail M.A."/>
            <person name="Rajandream M.A."/>
            <person name="Rutherford K.M."/>
            <person name="Rutter S."/>
            <person name="Seeger K."/>
            <person name="Simon S."/>
            <person name="Simmonds M."/>
            <person name="Skelton J."/>
            <person name="Squares R."/>
            <person name="Squares S."/>
            <person name="Stevens K."/>
            <person name="Taylor K."/>
            <person name="Whitehead S."/>
            <person name="Woodward J.R."/>
            <person name="Barrell B.G."/>
        </authorList>
    </citation>
    <scope>NUCLEOTIDE SEQUENCE [LARGE SCALE GENOMIC DNA]</scope>
    <source>
        <strain>TN</strain>
    </source>
</reference>
<name>AROC_MYCLE</name>
<gene>
    <name evidence="1" type="primary">aroC</name>
    <name type="synonym">aroF</name>
    <name type="ordered locus">ML0516</name>
</gene>
<dbReference type="EC" id="4.2.3.5" evidence="1"/>
<dbReference type="EMBL" id="AL583918">
    <property type="protein sequence ID" value="CAC30024.1"/>
    <property type="molecule type" value="Genomic_DNA"/>
</dbReference>
<dbReference type="PIR" id="D86973">
    <property type="entry name" value="D86973"/>
</dbReference>
<dbReference type="RefSeq" id="NP_301441.1">
    <property type="nucleotide sequence ID" value="NC_002677.1"/>
</dbReference>
<dbReference type="RefSeq" id="WP_010907765.1">
    <property type="nucleotide sequence ID" value="NC_002677.1"/>
</dbReference>
<dbReference type="SMR" id="Q9CCS6"/>
<dbReference type="STRING" id="272631.gene:17574337"/>
<dbReference type="KEGG" id="mle:ML0516"/>
<dbReference type="PATRIC" id="fig|272631.5.peg.905"/>
<dbReference type="Leproma" id="ML0516"/>
<dbReference type="eggNOG" id="COG0082">
    <property type="taxonomic scope" value="Bacteria"/>
</dbReference>
<dbReference type="HOGENOM" id="CLU_034547_2_0_11"/>
<dbReference type="OrthoDB" id="9771806at2"/>
<dbReference type="UniPathway" id="UPA00053">
    <property type="reaction ID" value="UER00090"/>
</dbReference>
<dbReference type="Proteomes" id="UP000000806">
    <property type="component" value="Chromosome"/>
</dbReference>
<dbReference type="GO" id="GO:0005829">
    <property type="term" value="C:cytosol"/>
    <property type="evidence" value="ECO:0007669"/>
    <property type="project" value="TreeGrafter"/>
</dbReference>
<dbReference type="GO" id="GO:0004107">
    <property type="term" value="F:chorismate synthase activity"/>
    <property type="evidence" value="ECO:0007669"/>
    <property type="project" value="UniProtKB-UniRule"/>
</dbReference>
<dbReference type="GO" id="GO:0010181">
    <property type="term" value="F:FMN binding"/>
    <property type="evidence" value="ECO:0007669"/>
    <property type="project" value="TreeGrafter"/>
</dbReference>
<dbReference type="GO" id="GO:0008652">
    <property type="term" value="P:amino acid biosynthetic process"/>
    <property type="evidence" value="ECO:0007669"/>
    <property type="project" value="UniProtKB-KW"/>
</dbReference>
<dbReference type="GO" id="GO:0009073">
    <property type="term" value="P:aromatic amino acid family biosynthetic process"/>
    <property type="evidence" value="ECO:0007669"/>
    <property type="project" value="UniProtKB-KW"/>
</dbReference>
<dbReference type="GO" id="GO:0009423">
    <property type="term" value="P:chorismate biosynthetic process"/>
    <property type="evidence" value="ECO:0007669"/>
    <property type="project" value="UniProtKB-UniRule"/>
</dbReference>
<dbReference type="CDD" id="cd07304">
    <property type="entry name" value="Chorismate_synthase"/>
    <property type="match status" value="1"/>
</dbReference>
<dbReference type="FunFam" id="3.60.150.10:FF:000002">
    <property type="entry name" value="Chorismate synthase"/>
    <property type="match status" value="1"/>
</dbReference>
<dbReference type="Gene3D" id="3.60.150.10">
    <property type="entry name" value="Chorismate synthase AroC"/>
    <property type="match status" value="1"/>
</dbReference>
<dbReference type="HAMAP" id="MF_00300">
    <property type="entry name" value="Chorismate_synth"/>
    <property type="match status" value="1"/>
</dbReference>
<dbReference type="InterPro" id="IPR000453">
    <property type="entry name" value="Chorismate_synth"/>
</dbReference>
<dbReference type="InterPro" id="IPR035904">
    <property type="entry name" value="Chorismate_synth_AroC_sf"/>
</dbReference>
<dbReference type="InterPro" id="IPR020541">
    <property type="entry name" value="Chorismate_synthase_CS"/>
</dbReference>
<dbReference type="NCBIfam" id="TIGR00033">
    <property type="entry name" value="aroC"/>
    <property type="match status" value="1"/>
</dbReference>
<dbReference type="NCBIfam" id="NF003793">
    <property type="entry name" value="PRK05382.1"/>
    <property type="match status" value="1"/>
</dbReference>
<dbReference type="PANTHER" id="PTHR21085">
    <property type="entry name" value="CHORISMATE SYNTHASE"/>
    <property type="match status" value="1"/>
</dbReference>
<dbReference type="PANTHER" id="PTHR21085:SF0">
    <property type="entry name" value="CHORISMATE SYNTHASE"/>
    <property type="match status" value="1"/>
</dbReference>
<dbReference type="Pfam" id="PF01264">
    <property type="entry name" value="Chorismate_synt"/>
    <property type="match status" value="1"/>
</dbReference>
<dbReference type="PIRSF" id="PIRSF001456">
    <property type="entry name" value="Chorismate_synth"/>
    <property type="match status" value="1"/>
</dbReference>
<dbReference type="SUPFAM" id="SSF103263">
    <property type="entry name" value="Chorismate synthase, AroC"/>
    <property type="match status" value="1"/>
</dbReference>
<dbReference type="PROSITE" id="PS00787">
    <property type="entry name" value="CHORISMATE_SYNTHASE_1"/>
    <property type="match status" value="1"/>
</dbReference>
<dbReference type="PROSITE" id="PS00788">
    <property type="entry name" value="CHORISMATE_SYNTHASE_2"/>
    <property type="match status" value="1"/>
</dbReference>
<dbReference type="PROSITE" id="PS00789">
    <property type="entry name" value="CHORISMATE_SYNTHASE_3"/>
    <property type="match status" value="1"/>
</dbReference>
<accession>Q9CCS6</accession>
<comment type="function">
    <text evidence="1">Catalyzes the anti-1,4-elimination of the C-3 phosphate and the C-6 proR hydrogen from 5-enolpyruvylshikimate-3-phosphate (EPSP) to yield chorismate, which is the branch point compound that serves as the starting substrate for the three terminal pathways of aromatic amino acid biosynthesis. This reaction introduces a second double bond into the aromatic ring system.</text>
</comment>
<comment type="catalytic activity">
    <reaction evidence="1">
        <text>5-O-(1-carboxyvinyl)-3-phosphoshikimate = chorismate + phosphate</text>
        <dbReference type="Rhea" id="RHEA:21020"/>
        <dbReference type="ChEBI" id="CHEBI:29748"/>
        <dbReference type="ChEBI" id="CHEBI:43474"/>
        <dbReference type="ChEBI" id="CHEBI:57701"/>
        <dbReference type="EC" id="4.2.3.5"/>
    </reaction>
</comment>
<comment type="cofactor">
    <cofactor evidence="1">
        <name>FMNH2</name>
        <dbReference type="ChEBI" id="CHEBI:57618"/>
    </cofactor>
    <text evidence="1">Reduced FMN (FMNH(2)).</text>
</comment>
<comment type="pathway">
    <text evidence="1">Metabolic intermediate biosynthesis; chorismate biosynthesis; chorismate from D-erythrose 4-phosphate and phosphoenolpyruvate: step 7/7.</text>
</comment>
<comment type="subunit">
    <text evidence="1">Homotetramer.</text>
</comment>
<comment type="similarity">
    <text evidence="1">Belongs to the chorismate synthase family.</text>
</comment>
<sequence length="407" mass="42473">MLRWITAGESHGRALVAVVEGMVAGVEVTSTAIADQLARRRLGYGRGARMAFERDGVTVLSGVRHGVTLGGPIAIEIDNTEWPKWESVMAADPVDAAELEDSARNAPLTRPRPGHADYAGMLKYGFDDARPVLERASARETAARVAAGTIARQFLRQALGVEVLSHVISIGASARYDGPPPGSEDLTVIDASLVRAFDEQVEKSMIAEIEAAKKDGDTLGGVVEAVVLGLPVGLGSFTSGDDRLDSQLAAAVMGIQAIKGVEIGDGFATARRRGSCAHDEMYSGPGGVVRLTNRSGGLEGGMTNGQPLRVRAAMKPISTVPRALATVDLATGEEAIAIHQRSDVCAVPAAGVVVETMVALVLARAALRKFGGDSLGETRRNLAAYQRAVADREAPVAQYCGESGIGG</sequence>
<proteinExistence type="inferred from homology"/>
<evidence type="ECO:0000255" key="1">
    <source>
        <dbReference type="HAMAP-Rule" id="MF_00300"/>
    </source>
</evidence>
<organism>
    <name type="scientific">Mycobacterium leprae (strain TN)</name>
    <dbReference type="NCBI Taxonomy" id="272631"/>
    <lineage>
        <taxon>Bacteria</taxon>
        <taxon>Bacillati</taxon>
        <taxon>Actinomycetota</taxon>
        <taxon>Actinomycetes</taxon>
        <taxon>Mycobacteriales</taxon>
        <taxon>Mycobacteriaceae</taxon>
        <taxon>Mycobacterium</taxon>
    </lineage>
</organism>